<feature type="chain" id="PRO_0000132118" description="Small ribosomal subunit protein uS13">
    <location>
        <begin position="1"/>
        <end position="121"/>
    </location>
</feature>
<feature type="region of interest" description="Disordered" evidence="2">
    <location>
        <begin position="92"/>
        <end position="121"/>
    </location>
</feature>
<proteinExistence type="inferred from homology"/>
<name>RS13_OCEIH</name>
<organism>
    <name type="scientific">Oceanobacillus iheyensis (strain DSM 14371 / CIP 107618 / JCM 11309 / KCTC 3954 / HTE831)</name>
    <dbReference type="NCBI Taxonomy" id="221109"/>
    <lineage>
        <taxon>Bacteria</taxon>
        <taxon>Bacillati</taxon>
        <taxon>Bacillota</taxon>
        <taxon>Bacilli</taxon>
        <taxon>Bacillales</taxon>
        <taxon>Bacillaceae</taxon>
        <taxon>Oceanobacillus</taxon>
    </lineage>
</organism>
<protein>
    <recommendedName>
        <fullName evidence="1">Small ribosomal subunit protein uS13</fullName>
    </recommendedName>
    <alternativeName>
        <fullName evidence="3">30S ribosomal protein S13</fullName>
    </alternativeName>
</protein>
<accession>Q8ETW0</accession>
<sequence>MARIAGIDIPRDKRVVISLTYIYGVGKTTAQQILKEAGVSEDTRVRDLTEDELGRIRQAVDQYNTEGDLRREVSLNIKRLIEIGSYRGIRHRRGLPVRGQKTKNNSRTRKGPRKTMANKKK</sequence>
<dbReference type="EMBL" id="BA000028">
    <property type="protein sequence ID" value="BAC12099.1"/>
    <property type="molecule type" value="Genomic_DNA"/>
</dbReference>
<dbReference type="RefSeq" id="WP_011064544.1">
    <property type="nucleotide sequence ID" value="NC_004193.1"/>
</dbReference>
<dbReference type="SMR" id="Q8ETW0"/>
<dbReference type="STRING" id="221109.gene:10732333"/>
<dbReference type="KEGG" id="oih:OB0143"/>
<dbReference type="eggNOG" id="COG0099">
    <property type="taxonomic scope" value="Bacteria"/>
</dbReference>
<dbReference type="HOGENOM" id="CLU_103849_1_1_9"/>
<dbReference type="OrthoDB" id="9803610at2"/>
<dbReference type="PhylomeDB" id="Q8ETW0"/>
<dbReference type="Proteomes" id="UP000000822">
    <property type="component" value="Chromosome"/>
</dbReference>
<dbReference type="GO" id="GO:0005829">
    <property type="term" value="C:cytosol"/>
    <property type="evidence" value="ECO:0007669"/>
    <property type="project" value="TreeGrafter"/>
</dbReference>
<dbReference type="GO" id="GO:0015935">
    <property type="term" value="C:small ribosomal subunit"/>
    <property type="evidence" value="ECO:0007669"/>
    <property type="project" value="TreeGrafter"/>
</dbReference>
<dbReference type="GO" id="GO:0019843">
    <property type="term" value="F:rRNA binding"/>
    <property type="evidence" value="ECO:0007669"/>
    <property type="project" value="UniProtKB-UniRule"/>
</dbReference>
<dbReference type="GO" id="GO:0003735">
    <property type="term" value="F:structural constituent of ribosome"/>
    <property type="evidence" value="ECO:0007669"/>
    <property type="project" value="InterPro"/>
</dbReference>
<dbReference type="GO" id="GO:0000049">
    <property type="term" value="F:tRNA binding"/>
    <property type="evidence" value="ECO:0007669"/>
    <property type="project" value="UniProtKB-UniRule"/>
</dbReference>
<dbReference type="GO" id="GO:0006412">
    <property type="term" value="P:translation"/>
    <property type="evidence" value="ECO:0007669"/>
    <property type="project" value="UniProtKB-UniRule"/>
</dbReference>
<dbReference type="FunFam" id="1.10.8.50:FF:000001">
    <property type="entry name" value="30S ribosomal protein S13"/>
    <property type="match status" value="1"/>
</dbReference>
<dbReference type="FunFam" id="4.10.910.10:FF:000001">
    <property type="entry name" value="30S ribosomal protein S13"/>
    <property type="match status" value="1"/>
</dbReference>
<dbReference type="Gene3D" id="1.10.8.50">
    <property type="match status" value="1"/>
</dbReference>
<dbReference type="Gene3D" id="4.10.910.10">
    <property type="entry name" value="30s ribosomal protein s13, domain 2"/>
    <property type="match status" value="1"/>
</dbReference>
<dbReference type="HAMAP" id="MF_01315">
    <property type="entry name" value="Ribosomal_uS13"/>
    <property type="match status" value="1"/>
</dbReference>
<dbReference type="InterPro" id="IPR027437">
    <property type="entry name" value="Rbsml_uS13_C"/>
</dbReference>
<dbReference type="InterPro" id="IPR001892">
    <property type="entry name" value="Ribosomal_uS13"/>
</dbReference>
<dbReference type="InterPro" id="IPR010979">
    <property type="entry name" value="Ribosomal_uS13-like_H2TH"/>
</dbReference>
<dbReference type="InterPro" id="IPR019980">
    <property type="entry name" value="Ribosomal_uS13_bac-type"/>
</dbReference>
<dbReference type="InterPro" id="IPR018269">
    <property type="entry name" value="Ribosomal_uS13_CS"/>
</dbReference>
<dbReference type="NCBIfam" id="TIGR03631">
    <property type="entry name" value="uS13_bact"/>
    <property type="match status" value="1"/>
</dbReference>
<dbReference type="PANTHER" id="PTHR10871">
    <property type="entry name" value="30S RIBOSOMAL PROTEIN S13/40S RIBOSOMAL PROTEIN S18"/>
    <property type="match status" value="1"/>
</dbReference>
<dbReference type="PANTHER" id="PTHR10871:SF1">
    <property type="entry name" value="SMALL RIBOSOMAL SUBUNIT PROTEIN US13M"/>
    <property type="match status" value="1"/>
</dbReference>
<dbReference type="Pfam" id="PF00416">
    <property type="entry name" value="Ribosomal_S13"/>
    <property type="match status" value="1"/>
</dbReference>
<dbReference type="PIRSF" id="PIRSF002134">
    <property type="entry name" value="Ribosomal_S13"/>
    <property type="match status" value="1"/>
</dbReference>
<dbReference type="SUPFAM" id="SSF46946">
    <property type="entry name" value="S13-like H2TH domain"/>
    <property type="match status" value="1"/>
</dbReference>
<dbReference type="PROSITE" id="PS00646">
    <property type="entry name" value="RIBOSOMAL_S13_1"/>
    <property type="match status" value="1"/>
</dbReference>
<dbReference type="PROSITE" id="PS50159">
    <property type="entry name" value="RIBOSOMAL_S13_2"/>
    <property type="match status" value="1"/>
</dbReference>
<evidence type="ECO:0000255" key="1">
    <source>
        <dbReference type="HAMAP-Rule" id="MF_01315"/>
    </source>
</evidence>
<evidence type="ECO:0000256" key="2">
    <source>
        <dbReference type="SAM" id="MobiDB-lite"/>
    </source>
</evidence>
<evidence type="ECO:0000305" key="3"/>
<keyword id="KW-1185">Reference proteome</keyword>
<keyword id="KW-0687">Ribonucleoprotein</keyword>
<keyword id="KW-0689">Ribosomal protein</keyword>
<keyword id="KW-0694">RNA-binding</keyword>
<keyword id="KW-0699">rRNA-binding</keyword>
<keyword id="KW-0820">tRNA-binding</keyword>
<reference key="1">
    <citation type="journal article" date="2002" name="Nucleic Acids Res.">
        <title>Genome sequence of Oceanobacillus iheyensis isolated from the Iheya Ridge and its unexpected adaptive capabilities to extreme environments.</title>
        <authorList>
            <person name="Takami H."/>
            <person name="Takaki Y."/>
            <person name="Uchiyama I."/>
        </authorList>
    </citation>
    <scope>NUCLEOTIDE SEQUENCE [LARGE SCALE GENOMIC DNA]</scope>
    <source>
        <strain>DSM 14371 / CIP 107618 / JCM 11309 / KCTC 3954 / HTE831</strain>
    </source>
</reference>
<comment type="function">
    <text evidence="1">Located at the top of the head of the 30S subunit, it contacts several helices of the 16S rRNA. In the 70S ribosome it contacts the 23S rRNA (bridge B1a) and protein L5 of the 50S subunit (bridge B1b), connecting the 2 subunits; these bridges are implicated in subunit movement. Contacts the tRNAs in the A and P-sites.</text>
</comment>
<comment type="subunit">
    <text evidence="1">Part of the 30S ribosomal subunit. Forms a loose heterodimer with protein S19. Forms two bridges to the 50S subunit in the 70S ribosome.</text>
</comment>
<comment type="similarity">
    <text evidence="1">Belongs to the universal ribosomal protein uS13 family.</text>
</comment>
<gene>
    <name evidence="1" type="primary">rpsM</name>
    <name type="ordered locus">OB0143</name>
</gene>